<protein>
    <recommendedName>
        <fullName>Antimicrobial peptide CHP1</fullName>
    </recommendedName>
    <alternativeName>
        <fullName>Chicken heterophil peptide 1</fullName>
    </alternativeName>
</protein>
<reference key="1">
    <citation type="journal article" date="1994" name="J. Leukoc. Biol.">
        <title>Isolation of antimicrobial peptides from avian heterophils.</title>
        <authorList>
            <person name="Evans E.W."/>
            <person name="Beach G.G."/>
            <person name="Wunderlich J."/>
            <person name="Harmon B.G."/>
        </authorList>
    </citation>
    <scope>PROTEIN SEQUENCE</scope>
</reference>
<proteinExistence type="evidence at protein level"/>
<accession>P80389</accession>
<name>AMP1_CHICK</name>
<comment type="function">
    <text>Bactericidal activity; inhibits S.aureus and E.coli.</text>
</comment>
<feature type="peptide" id="PRO_0000044771" description="Antimicrobial peptide CHP1">
    <location>
        <begin position="1"/>
        <end position="39"/>
    </location>
</feature>
<feature type="disulfide bond" evidence="1">
    <location>
        <begin position="6"/>
        <end position="28"/>
    </location>
</feature>
<feature type="disulfide bond" evidence="1">
    <location>
        <begin position="13"/>
        <end position="34"/>
    </location>
</feature>
<feature type="disulfide bond" evidence="1">
    <location>
        <begin position="18"/>
        <end position="35"/>
    </location>
</feature>
<keyword id="KW-0044">Antibiotic</keyword>
<keyword id="KW-0929">Antimicrobial</keyword>
<keyword id="KW-0903">Direct protein sequencing</keyword>
<keyword id="KW-1015">Disulfide bond</keyword>
<keyword id="KW-1185">Reference proteome</keyword>
<organism>
    <name type="scientific">Gallus gallus</name>
    <name type="common">Chicken</name>
    <dbReference type="NCBI Taxonomy" id="9031"/>
    <lineage>
        <taxon>Eukaryota</taxon>
        <taxon>Metazoa</taxon>
        <taxon>Chordata</taxon>
        <taxon>Craniata</taxon>
        <taxon>Vertebrata</taxon>
        <taxon>Euteleostomi</taxon>
        <taxon>Archelosauria</taxon>
        <taxon>Archosauria</taxon>
        <taxon>Dinosauria</taxon>
        <taxon>Saurischia</taxon>
        <taxon>Theropoda</taxon>
        <taxon>Coelurosauria</taxon>
        <taxon>Aves</taxon>
        <taxon>Neognathae</taxon>
        <taxon>Galloanserae</taxon>
        <taxon>Galliformes</taxon>
        <taxon>Phasianidae</taxon>
        <taxon>Phasianinae</taxon>
        <taxon>Gallus</taxon>
    </lineage>
</organism>
<sequence length="39" mass="4480">GRKSDCFRKSGFCAFLKCPSLTLISGKCSRFYLCCKRIR</sequence>
<dbReference type="SMR" id="P80389"/>
<dbReference type="FunCoup" id="P80389">
    <property type="interactions" value="17"/>
</dbReference>
<dbReference type="InParanoid" id="P80389"/>
<dbReference type="Proteomes" id="UP000000539">
    <property type="component" value="Unassembled WGS sequence"/>
</dbReference>
<dbReference type="GO" id="GO:0005576">
    <property type="term" value="C:extracellular region"/>
    <property type="evidence" value="ECO:0007669"/>
    <property type="project" value="InterPro"/>
</dbReference>
<dbReference type="GO" id="GO:0042742">
    <property type="term" value="P:defense response to bacterium"/>
    <property type="evidence" value="ECO:0007669"/>
    <property type="project" value="UniProtKB-KW"/>
</dbReference>
<dbReference type="InterPro" id="IPR001855">
    <property type="entry name" value="Defensin_beta-like"/>
</dbReference>
<dbReference type="Pfam" id="PF00711">
    <property type="entry name" value="Defensin_beta"/>
    <property type="match status" value="1"/>
</dbReference>
<dbReference type="SUPFAM" id="SSF57392">
    <property type="entry name" value="Defensin-like"/>
    <property type="match status" value="1"/>
</dbReference>
<evidence type="ECO:0000250" key="1"/>